<reference key="1">
    <citation type="journal article" date="2010" name="J. Am. Chem. Soc.">
        <title>Genome-based characterization of two prenylation steps in the assembly of the stephacidin and notoamide anticancer agents in a marine-derived Aspergillus sp.</title>
        <authorList>
            <person name="Ding Y."/>
            <person name="de Wet J.R."/>
            <person name="Cavalcoli J."/>
            <person name="Li S."/>
            <person name="Greshock T.J."/>
            <person name="Miller K.A."/>
            <person name="Finefield J.M."/>
            <person name="Sunderhaus J.D."/>
            <person name="McAfoos T.J."/>
            <person name="Tsukamoto S."/>
            <person name="Williams R.M."/>
            <person name="Sherman D.H."/>
        </authorList>
    </citation>
    <scope>NUCLEOTIDE SEQUENCE [GENOMIC DNA]</scope>
    <scope>FUNCTION</scope>
    <source>
        <strain>MF297-2</strain>
    </source>
</reference>
<reference key="2">
    <citation type="journal article" date="2007" name="Angew. Chem. Int. Ed.">
        <title>Notoamides A-D: prenylated indole alkaloids isolated from a marine-derived fungus, Aspergillus sp.</title>
        <authorList>
            <person name="Kato H."/>
            <person name="Yoshida T."/>
            <person name="Tokue T."/>
            <person name="Nojiri Y."/>
            <person name="Hirota H."/>
            <person name="Ohta T."/>
            <person name="Williams R.M."/>
            <person name="Tsukamoto S."/>
        </authorList>
    </citation>
    <scope>BIOTECHNOLOGY</scope>
</reference>
<reference key="3">
    <citation type="journal article" date="2012" name="J. Am. Chem. Soc.">
        <title>Biochemical characterization of NotB as an FAD-dependent oxidase in the biosynthesis of notoamide indole alkaloids.</title>
        <authorList>
            <person name="Li S."/>
            <person name="Finefield J.M."/>
            <person name="Sunderhaus J.D."/>
            <person name="McAfoos T.J."/>
            <person name="Williams R.M."/>
            <person name="Sherman D.H."/>
        </authorList>
    </citation>
    <scope>FUNCTION</scope>
</reference>
<reference key="4">
    <citation type="journal article" date="2012" name="Med. Chem. Commun.">
        <title>Comparative analysis of the biosynthetic systems for fungal bicyclo[2.2.2]diazaoctane indole alkaloids: the (+)/(-)-notoamide, paraherquamide and malbrancheamide pathways.</title>
        <authorList>
            <person name="Li S."/>
            <person name="Anand K."/>
            <person name="Tran H."/>
            <person name="Yu F."/>
            <person name="Finefield J.M."/>
            <person name="Sunderhaus J.D."/>
            <person name="McAfoos T.J."/>
            <person name="Tsukamoto S."/>
            <person name="Williams R.M."/>
            <person name="Sherman D.H."/>
        </authorList>
    </citation>
    <scope>FUNCTION</scope>
</reference>
<protein>
    <recommendedName>
        <fullName evidence="5">NmrA-like family domain-containing oxidoreductase notA</fullName>
        <ecNumber evidence="6">1.-.-.-</ecNumber>
    </recommendedName>
    <alternativeName>
        <fullName evidence="5">Notoamide biosynthesis cluster protein A</fullName>
    </alternativeName>
</protein>
<gene>
    <name evidence="5" type="primary">notA</name>
</gene>
<accession>E1ACP6</accession>
<keyword id="KW-0017">Alkaloid metabolism</keyword>
<keyword id="KW-0521">NADP</keyword>
<keyword id="KW-0560">Oxidoreductase</keyword>
<feature type="chain" id="PRO_0000448813" description="NmrA-like family domain-containing oxidoreductase notA">
    <location>
        <begin position="1"/>
        <end position="339"/>
    </location>
</feature>
<feature type="binding site" evidence="1">
    <location>
        <begin position="13"/>
        <end position="18"/>
    </location>
    <ligand>
        <name>NADP(+)</name>
        <dbReference type="ChEBI" id="CHEBI:58349"/>
    </ligand>
</feature>
<feature type="binding site" evidence="1">
    <location>
        <begin position="39"/>
        <end position="43"/>
    </location>
    <ligand>
        <name>NADP(+)</name>
        <dbReference type="ChEBI" id="CHEBI:58349"/>
    </ligand>
</feature>
<feature type="binding site" evidence="1">
    <location>
        <begin position="60"/>
        <end position="61"/>
    </location>
    <ligand>
        <name>NADP(+)</name>
        <dbReference type="ChEBI" id="CHEBI:58349"/>
    </ligand>
</feature>
<feature type="binding site" evidence="1">
    <location>
        <begin position="81"/>
        <end position="83"/>
    </location>
    <ligand>
        <name>NADP(+)</name>
        <dbReference type="ChEBI" id="CHEBI:58349"/>
    </ligand>
</feature>
<feature type="binding site" evidence="1">
    <location>
        <position position="140"/>
    </location>
    <ligand>
        <name>NADP(+)</name>
        <dbReference type="ChEBI" id="CHEBI:58349"/>
    </ligand>
</feature>
<feature type="binding site" evidence="1">
    <location>
        <begin position="164"/>
        <end position="167"/>
    </location>
    <ligand>
        <name>NADP(+)</name>
        <dbReference type="ChEBI" id="CHEBI:58349"/>
    </ligand>
</feature>
<dbReference type="EC" id="1.-.-.-" evidence="6"/>
<dbReference type="EMBL" id="HM622670">
    <property type="protein sequence ID" value="ADM34134.1"/>
    <property type="molecule type" value="Genomic_DNA"/>
</dbReference>
<dbReference type="SMR" id="E1ACP6"/>
<dbReference type="GO" id="GO:0005634">
    <property type="term" value="C:nucleus"/>
    <property type="evidence" value="ECO:0007669"/>
    <property type="project" value="TreeGrafter"/>
</dbReference>
<dbReference type="GO" id="GO:0016491">
    <property type="term" value="F:oxidoreductase activity"/>
    <property type="evidence" value="ECO:0007669"/>
    <property type="project" value="UniProtKB-KW"/>
</dbReference>
<dbReference type="GO" id="GO:0009820">
    <property type="term" value="P:alkaloid metabolic process"/>
    <property type="evidence" value="ECO:0007669"/>
    <property type="project" value="UniProtKB-KW"/>
</dbReference>
<dbReference type="CDD" id="cd05251">
    <property type="entry name" value="NmrA_like_SDR_a"/>
    <property type="match status" value="1"/>
</dbReference>
<dbReference type="Gene3D" id="3.40.50.720">
    <property type="entry name" value="NAD(P)-binding Rossmann-like Domain"/>
    <property type="match status" value="1"/>
</dbReference>
<dbReference type="Gene3D" id="3.90.25.10">
    <property type="entry name" value="UDP-galactose 4-epimerase, domain 1"/>
    <property type="match status" value="1"/>
</dbReference>
<dbReference type="InterPro" id="IPR036291">
    <property type="entry name" value="NAD(P)-bd_dom_sf"/>
</dbReference>
<dbReference type="InterPro" id="IPR008030">
    <property type="entry name" value="NmrA-like"/>
</dbReference>
<dbReference type="InterPro" id="IPR051164">
    <property type="entry name" value="NmrA-like_oxidored"/>
</dbReference>
<dbReference type="PANTHER" id="PTHR42748">
    <property type="entry name" value="NITROGEN METABOLITE REPRESSION PROTEIN NMRA FAMILY MEMBER"/>
    <property type="match status" value="1"/>
</dbReference>
<dbReference type="PANTHER" id="PTHR42748:SF30">
    <property type="entry name" value="NMRA-LIKE DOMAIN-CONTAINING PROTEIN"/>
    <property type="match status" value="1"/>
</dbReference>
<dbReference type="Pfam" id="PF05368">
    <property type="entry name" value="NmrA"/>
    <property type="match status" value="1"/>
</dbReference>
<dbReference type="SUPFAM" id="SSF51735">
    <property type="entry name" value="NAD(P)-binding Rossmann-fold domains"/>
    <property type="match status" value="1"/>
</dbReference>
<comment type="function">
    <text evidence="3 4 7">NmrA-like family domain-containing oxidoreductase; part of the gene cluster that mediates the biosynthesis of notoamide, a fungal indole alkaloid that belongs to a family of natural products containing a characteristic bicyclo[2.2.2]diazaoctane core (PubMed:20722388). The first step of notoamide biosynthesis involves coupling of L-proline and L-tryptophan by the bimodular NRPS notE, to produce cyclo-L-tryptophan-L-proline called brevianamide F (PubMed:20722388). The reverse prenyltransferase notF then acts as a deoxybrevianamide E synthase and converts brevianamide F to deoxybrevianamide E via reverse prenylation at C-2 of the indole ring leading to the bicyclo[2.2.2]diazaoctane core (PubMed:20722388). Deoxybrevianamide E is further hydroxylated at C-6 of the indole ring, likely catalyzed by the cytochrome P450 monooxygenase notG, to yield 6-hydroxy-deoxybrevianamide E (Probable). 6-hydroxy-deoxybrevianamide E is a specific substrate of the prenyltransferase notC for normal prenylation at C-7 to produce 6-hydroxy-7-prenyl-deoxybrevianamide, also called notoamide S (PubMed:20722388). As the proposed pivotal branching point in notoamide biosynthesis, notoamide S can be diverted to notoamide E through an oxidative pyran ring closure putatively catalyzed by either notH cytochrome P450 monooxygenase or the notD FAD-linked oxidoreductase (Probable). This step would be followed by an indole 2,3-epoxidation-initiated pinacol-like rearrangement catalyzed by the notB FAD-dependent monooxygenase leading to the formation of notoamide C and notoamide D (PubMed:22188465). On the other hand notoamide S is converted to notoamide T by notH (or notD), a bifunctional oxidase that also functions as the intramolecular Diels-Alderase responsible for generation of (+)-notoamide T (Probable). To generate antipodal (-)-notoaminide T, notH' (or notD') in Aspergillus versicolor is expected to catalyze a Diels-Alder reaction leading to the opposite stereochemistry (Probable). The remaining oxidoreductase notD (or notH) likely catalyzes the oxidative pyran ring formation to yield (+)-stephacidin A (Probable). The FAD-dependent monooxygenase notI is highly similar to notB and is predicted to catalyze a similar conversion from (+)-stephacidin A to (-)-notoamide B via the 2,3-epoxidation of (+)-stephacidin A followed by a pinacol-type rearrangement (Probable). Finally, it remains unclear which enzyme could be responsible for the final hydroxylation steps leading to notoamide A and sclerotiamide (Probable).</text>
</comment>
<comment type="biotechnology">
    <text evidence="2">Notoamides have been shown to exhibit antitumoral activities (PubMed:17304611). Notoamides A-C show moderate cytotoxicity against HeLa and L1210 cells with IC(50) values in the range of 22-52 mg/ml, but the IC(50) value of notoamide D is greater than 100 mg/ml (PubMed:17304611). Moreover, notoamide C induces G2/M-cell cycle arrest at a concentration of 6.3 mg/ml (PubMed:17304611).</text>
</comment>
<comment type="similarity">
    <text evidence="6">Belongs to the NmrA-type oxidoreductase family.</text>
</comment>
<evidence type="ECO:0000250" key="1">
    <source>
        <dbReference type="UniProtKB" id="Q9HBL8"/>
    </source>
</evidence>
<evidence type="ECO:0000269" key="2">
    <source>
    </source>
</evidence>
<evidence type="ECO:0000269" key="3">
    <source>
    </source>
</evidence>
<evidence type="ECO:0000269" key="4">
    <source>
    </source>
</evidence>
<evidence type="ECO:0000303" key="5">
    <source>
    </source>
</evidence>
<evidence type="ECO:0000305" key="6"/>
<evidence type="ECO:0000305" key="7">
    <source>
    </source>
</evidence>
<proteinExistence type="evidence at protein level"/>
<organism>
    <name type="scientific">Aspergillus sp. (strain MF297-2)</name>
    <dbReference type="NCBI Taxonomy" id="877550"/>
    <lineage>
        <taxon>Eukaryota</taxon>
        <taxon>Fungi</taxon>
        <taxon>Dikarya</taxon>
        <taxon>Ascomycota</taxon>
        <taxon>Pezizomycotina</taxon>
        <taxon>Eurotiomycetes</taxon>
        <taxon>Eurotiomycetidae</taxon>
        <taxon>Eurotiales</taxon>
        <taxon>Aspergillaceae</taxon>
        <taxon>Aspergillus</taxon>
    </lineage>
</organism>
<sequence length="339" mass="37479">MANDNRRTVTVYGATGAQGGAVARSLLKNHAFKVRAITRKPDSEAAKALRALGAEIVQGDGWSKEQMVAAFSGSWAAFVNTNSDDPCFVDGHPPTEVDLGKIIIDAIIEAGTVKHLVYSSFVDTSSFTNGQASIKAADMKAKVQRYAADSGHFDTVCPLYQGWYMGIFLRQDYARALGGFPYFQDEDGFRTLHLPRWGTHTDMPIPWISLEDDFGDIVHGIFLEPENYNRRVVPTVSDVCTYPEVMDAVHALATGQKAQYIPVTDWEAHFGDSHHGRESLTIFKFGHFTNGKYFGHEPISTDISAYLKSKAAEAQGKDPSDRKLITLSEWFEKHVAPLI</sequence>
<name>NOTA_ASPSM</name>